<proteinExistence type="evidence at protein level"/>
<comment type="function">
    <text>Lysozymes have primarily a bacteriolytic function; those in tissues and body fluids are associated with the monocyte-macrophage system and enhance the activity of immunoagents.</text>
</comment>
<comment type="catalytic activity">
    <reaction>
        <text>Hydrolysis of (1-&gt;4)-beta-linkages between N-acetylmuramic acid and N-acetyl-D-glucosamine residues in a peptidoglycan and between N-acetyl-D-glucosamine residues in chitodextrins.</text>
        <dbReference type="EC" id="3.2.1.17"/>
    </reaction>
</comment>
<comment type="cofactor">
    <cofactor>
        <name>Ca(2+)</name>
        <dbReference type="ChEBI" id="CHEBI:29108"/>
    </cofactor>
    <text>Binds 1 Ca(2+) ion per subunit.</text>
</comment>
<comment type="subunit">
    <text>Monomer.</text>
</comment>
<comment type="subcellular location">
    <subcellularLocation>
        <location>Secreted</location>
    </subcellularLocation>
</comment>
<comment type="miscellaneous">
    <text>Lysozyme C is capable of both hydrolysis and transglycosylation; it also shows a slight esterase activity. It acts rapidly on both peptide-substituted and unsubstituted peptidoglycan, and slowly on chitin oligosaccharides.</text>
</comment>
<comment type="similarity">
    <text evidence="2">Belongs to the glycosyl hydrolase 22 family.</text>
</comment>
<protein>
    <recommendedName>
        <fullName>Lysozyme C</fullName>
        <ecNumber>3.2.1.17</ecNumber>
    </recommendedName>
    <alternativeName>
        <fullName>1,4-beta-N-acetylmuramidase C</fullName>
    </alternativeName>
</protein>
<name>LYSC_COLLI</name>
<accession>P00708</accession>
<feature type="chain" id="PRO_0000208862" description="Lysozyme C">
    <location>
        <begin position="1"/>
        <end position="127"/>
    </location>
</feature>
<feature type="domain" description="C-type lysozyme" evidence="2">
    <location>
        <begin position="1"/>
        <end position="127"/>
    </location>
</feature>
<feature type="active site" evidence="2">
    <location>
        <position position="35"/>
    </location>
</feature>
<feature type="active site" evidence="2">
    <location>
        <position position="52"/>
    </location>
</feature>
<feature type="binding site" evidence="1">
    <location>
        <position position="82"/>
    </location>
    <ligand>
        <name>Ca(2+)</name>
        <dbReference type="ChEBI" id="CHEBI:29108"/>
    </ligand>
</feature>
<feature type="binding site" evidence="1 3">
    <location>
        <position position="85"/>
    </location>
    <ligand>
        <name>Ca(2+)</name>
        <dbReference type="ChEBI" id="CHEBI:29108"/>
    </ligand>
</feature>
<feature type="binding site" evidence="1">
    <location>
        <position position="87"/>
    </location>
    <ligand>
        <name>Ca(2+)</name>
        <dbReference type="ChEBI" id="CHEBI:29108"/>
    </ligand>
</feature>
<feature type="binding site" evidence="1 3">
    <location>
        <position position="90"/>
    </location>
    <ligand>
        <name>Ca(2+)</name>
        <dbReference type="ChEBI" id="CHEBI:29108"/>
    </ligand>
</feature>
<feature type="binding site" evidence="1 3">
    <location>
        <position position="91"/>
    </location>
    <ligand>
        <name>Ca(2+)</name>
        <dbReference type="ChEBI" id="CHEBI:29108"/>
    </ligand>
</feature>
<feature type="disulfide bond" evidence="2">
    <location>
        <begin position="6"/>
        <end position="127"/>
    </location>
</feature>
<feature type="disulfide bond" evidence="2">
    <location>
        <begin position="30"/>
        <end position="115"/>
    </location>
</feature>
<feature type="disulfide bond" evidence="2">
    <location>
        <begin position="64"/>
        <end position="80"/>
    </location>
</feature>
<feature type="disulfide bond" evidence="2">
    <location>
        <begin position="76"/>
        <end position="94"/>
    </location>
</feature>
<gene>
    <name type="primary">LYZ</name>
</gene>
<dbReference type="EC" id="3.2.1.17"/>
<dbReference type="PIR" id="A00863">
    <property type="entry name" value="LZPY"/>
</dbReference>
<dbReference type="SMR" id="P00708"/>
<dbReference type="CAZy" id="GH22">
    <property type="family name" value="Glycoside Hydrolase Family 22"/>
</dbReference>
<dbReference type="eggNOG" id="ENOG502S4CB">
    <property type="taxonomic scope" value="Eukaryota"/>
</dbReference>
<dbReference type="GO" id="GO:0005576">
    <property type="term" value="C:extracellular region"/>
    <property type="evidence" value="ECO:0007669"/>
    <property type="project" value="UniProtKB-SubCell"/>
</dbReference>
<dbReference type="GO" id="GO:0003796">
    <property type="term" value="F:lysozyme activity"/>
    <property type="evidence" value="ECO:0007669"/>
    <property type="project" value="UniProtKB-EC"/>
</dbReference>
<dbReference type="GO" id="GO:0046872">
    <property type="term" value="F:metal ion binding"/>
    <property type="evidence" value="ECO:0007669"/>
    <property type="project" value="UniProtKB-KW"/>
</dbReference>
<dbReference type="GO" id="GO:0050829">
    <property type="term" value="P:defense response to Gram-negative bacterium"/>
    <property type="evidence" value="ECO:0007669"/>
    <property type="project" value="TreeGrafter"/>
</dbReference>
<dbReference type="GO" id="GO:0050830">
    <property type="term" value="P:defense response to Gram-positive bacterium"/>
    <property type="evidence" value="ECO:0007669"/>
    <property type="project" value="TreeGrafter"/>
</dbReference>
<dbReference type="GO" id="GO:0031640">
    <property type="term" value="P:killing of cells of another organism"/>
    <property type="evidence" value="ECO:0007669"/>
    <property type="project" value="UniProtKB-KW"/>
</dbReference>
<dbReference type="CDD" id="cd16897">
    <property type="entry name" value="LYZ_C"/>
    <property type="match status" value="1"/>
</dbReference>
<dbReference type="FunFam" id="1.10.530.10:FF:000001">
    <property type="entry name" value="Lysozyme C"/>
    <property type="match status" value="1"/>
</dbReference>
<dbReference type="Gene3D" id="1.10.530.10">
    <property type="match status" value="1"/>
</dbReference>
<dbReference type="InterPro" id="IPR001916">
    <property type="entry name" value="Glyco_hydro_22"/>
</dbReference>
<dbReference type="InterPro" id="IPR019799">
    <property type="entry name" value="Glyco_hydro_22_CS"/>
</dbReference>
<dbReference type="InterPro" id="IPR000974">
    <property type="entry name" value="Glyco_hydro_22_lys"/>
</dbReference>
<dbReference type="InterPro" id="IPR023346">
    <property type="entry name" value="Lysozyme-like_dom_sf"/>
</dbReference>
<dbReference type="PANTHER" id="PTHR11407">
    <property type="entry name" value="LYSOZYME C"/>
    <property type="match status" value="1"/>
</dbReference>
<dbReference type="PANTHER" id="PTHR11407:SF28">
    <property type="entry name" value="LYSOZYME C"/>
    <property type="match status" value="1"/>
</dbReference>
<dbReference type="Pfam" id="PF00062">
    <property type="entry name" value="Lys"/>
    <property type="match status" value="1"/>
</dbReference>
<dbReference type="PRINTS" id="PR00137">
    <property type="entry name" value="LYSOZYME"/>
</dbReference>
<dbReference type="PRINTS" id="PR00135">
    <property type="entry name" value="LYZLACT"/>
</dbReference>
<dbReference type="SMART" id="SM00263">
    <property type="entry name" value="LYZ1"/>
    <property type="match status" value="1"/>
</dbReference>
<dbReference type="SUPFAM" id="SSF53955">
    <property type="entry name" value="Lysozyme-like"/>
    <property type="match status" value="1"/>
</dbReference>
<dbReference type="PROSITE" id="PS00128">
    <property type="entry name" value="GLYCOSYL_HYDROL_F22_1"/>
    <property type="match status" value="1"/>
</dbReference>
<dbReference type="PROSITE" id="PS51348">
    <property type="entry name" value="GLYCOSYL_HYDROL_F22_2"/>
    <property type="match status" value="1"/>
</dbReference>
<keyword id="KW-0929">Antimicrobial</keyword>
<keyword id="KW-0081">Bacteriolytic enzyme</keyword>
<keyword id="KW-0106">Calcium</keyword>
<keyword id="KW-0903">Direct protein sequencing</keyword>
<keyword id="KW-1015">Disulfide bond</keyword>
<keyword id="KW-0326">Glycosidase</keyword>
<keyword id="KW-0378">Hydrolase</keyword>
<keyword id="KW-0479">Metal-binding</keyword>
<keyword id="KW-0964">Secreted</keyword>
<sequence>KDIPRCELVKILRRHGFEGFVGKTVANWVCLVKHESGYRTTAFNNNGPNSRDYGIFQINSKYWCNDGKTRGSKNACNINCSKLRDDNIADDIQCAKKIAREARGLTPWVAWKKYCQGKDLSSYVRGC</sequence>
<reference key="1">
    <citation type="journal article" date="1985" name="Biochem. Int.">
        <title>Amino acid sequence of pigeon egg-white lysozyme.</title>
        <authorList>
            <person name="Rodriguez R."/>
            <person name="Menendez-Arias L."/>
            <person name="Gonzalez de Buitrago G."/>
            <person name="Gavilanes J.G."/>
        </authorList>
    </citation>
    <scope>PROTEIN SEQUENCE</scope>
    <source>
        <tissue>Egg white</tissue>
    </source>
</reference>
<reference key="2">
    <citation type="journal article" date="1988" name="Biol. Chem. Hoppe-Seyler">
        <title>Calcium-binding lysozymes.</title>
        <authorList>
            <person name="Nitta K."/>
            <person name="Tsuge H."/>
            <person name="Shimazaki K."/>
            <person name="Sugai S."/>
        </authorList>
    </citation>
    <scope>CALCIUM-BINDING DATA</scope>
</reference>
<reference key="3">
    <citation type="journal article" date="1992" name="J. Biochem.">
        <title>Crystallization and preliminary X-ray structure analysis of pigeon egg-white lysozyme.</title>
        <authorList>
            <person name="Yao M."/>
            <person name="Tanaka I."/>
            <person name="Hikichi K."/>
            <person name="Nitta K."/>
        </authorList>
    </citation>
    <scope>X-RAY CRYSTALLOGRAPHY (2.0 ANGSTROMS)</scope>
</reference>
<organism>
    <name type="scientific">Columba livia</name>
    <name type="common">Rock dove</name>
    <dbReference type="NCBI Taxonomy" id="8932"/>
    <lineage>
        <taxon>Eukaryota</taxon>
        <taxon>Metazoa</taxon>
        <taxon>Chordata</taxon>
        <taxon>Craniata</taxon>
        <taxon>Vertebrata</taxon>
        <taxon>Euteleostomi</taxon>
        <taxon>Archelosauria</taxon>
        <taxon>Archosauria</taxon>
        <taxon>Dinosauria</taxon>
        <taxon>Saurischia</taxon>
        <taxon>Theropoda</taxon>
        <taxon>Coelurosauria</taxon>
        <taxon>Aves</taxon>
        <taxon>Neognathae</taxon>
        <taxon>Neoaves</taxon>
        <taxon>Columbimorphae</taxon>
        <taxon>Columbiformes</taxon>
        <taxon>Columbidae</taxon>
        <taxon>Columba</taxon>
    </lineage>
</organism>
<evidence type="ECO:0000250" key="1">
    <source>
        <dbReference type="UniProtKB" id="P11376"/>
    </source>
</evidence>
<evidence type="ECO:0000255" key="2">
    <source>
        <dbReference type="PROSITE-ProRule" id="PRU00680"/>
    </source>
</evidence>
<evidence type="ECO:0000305" key="3">
    <source>
    </source>
</evidence>